<dbReference type="EMBL" id="AK011442">
    <property type="protein sequence ID" value="BAB27622.1"/>
    <property type="molecule type" value="mRNA"/>
</dbReference>
<dbReference type="EMBL" id="AK035195">
    <property type="protein sequence ID" value="BAC28975.1"/>
    <property type="molecule type" value="mRNA"/>
</dbReference>
<dbReference type="EMBL" id="BC009002">
    <property type="protein sequence ID" value="AAH09002.1"/>
    <property type="molecule type" value="mRNA"/>
</dbReference>
<dbReference type="CCDS" id="CCDS16028.1"/>
<dbReference type="RefSeq" id="NP_083086.1">
    <property type="nucleotide sequence ID" value="NM_028810.2"/>
</dbReference>
<dbReference type="PDB" id="1GWN">
    <property type="method" value="X-ray"/>
    <property type="resolution" value="2.10 A"/>
    <property type="chains" value="A/C=16-200"/>
</dbReference>
<dbReference type="PDBsum" id="1GWN"/>
<dbReference type="SMR" id="P61588"/>
<dbReference type="BioGRID" id="216565">
    <property type="interactions" value="5"/>
</dbReference>
<dbReference type="FunCoup" id="P61588">
    <property type="interactions" value="1168"/>
</dbReference>
<dbReference type="IntAct" id="P61588">
    <property type="interactions" value="10"/>
</dbReference>
<dbReference type="MINT" id="P61588"/>
<dbReference type="STRING" id="10090.ENSMUSP00000017288"/>
<dbReference type="iPTMnet" id="P61588"/>
<dbReference type="PhosphoSitePlus" id="P61588"/>
<dbReference type="PaxDb" id="10090-ENSMUSP00000017288"/>
<dbReference type="PeptideAtlas" id="P61588"/>
<dbReference type="ProteomicsDB" id="300426"/>
<dbReference type="Pumba" id="P61588"/>
<dbReference type="Antibodypedia" id="33646">
    <property type="antibodies" value="223 antibodies from 33 providers"/>
</dbReference>
<dbReference type="DNASU" id="74194"/>
<dbReference type="Ensembl" id="ENSMUST00000017288.9">
    <property type="protein sequence ID" value="ENSMUSP00000017288.3"/>
    <property type="gene ID" value="ENSMUSG00000017144.9"/>
</dbReference>
<dbReference type="GeneID" id="74194"/>
<dbReference type="KEGG" id="mmu:74194"/>
<dbReference type="UCSC" id="uc008jqf.1">
    <property type="organism name" value="mouse"/>
</dbReference>
<dbReference type="AGR" id="MGI:1921444"/>
<dbReference type="CTD" id="390"/>
<dbReference type="MGI" id="MGI:1921444">
    <property type="gene designation" value="Rnd3"/>
</dbReference>
<dbReference type="VEuPathDB" id="HostDB:ENSMUSG00000017144"/>
<dbReference type="eggNOG" id="KOG0393">
    <property type="taxonomic scope" value="Eukaryota"/>
</dbReference>
<dbReference type="GeneTree" id="ENSGT00940000157541"/>
<dbReference type="HOGENOM" id="CLU_041217_21_1_1"/>
<dbReference type="InParanoid" id="P61588"/>
<dbReference type="OMA" id="RPCQKSS"/>
<dbReference type="OrthoDB" id="8830751at2759"/>
<dbReference type="PhylomeDB" id="P61588"/>
<dbReference type="TreeFam" id="TF330887"/>
<dbReference type="Reactome" id="R-MMU-9696264">
    <property type="pathway name" value="RND3 GTPase cycle"/>
</dbReference>
<dbReference type="BioGRID-ORCS" id="74194">
    <property type="hits" value="2 hits in 75 CRISPR screens"/>
</dbReference>
<dbReference type="ChiTaRS" id="Rnd3">
    <property type="organism name" value="mouse"/>
</dbReference>
<dbReference type="EvolutionaryTrace" id="P61588"/>
<dbReference type="PRO" id="PR:P61588"/>
<dbReference type="Proteomes" id="UP000000589">
    <property type="component" value="Chromosome 2"/>
</dbReference>
<dbReference type="RNAct" id="P61588">
    <property type="molecule type" value="protein"/>
</dbReference>
<dbReference type="Bgee" id="ENSMUSG00000017144">
    <property type="expression patterns" value="Expressed in undifferentiated genital tubercle and 241 other cell types or tissues"/>
</dbReference>
<dbReference type="ExpressionAtlas" id="P61588">
    <property type="expression patterns" value="baseline and differential"/>
</dbReference>
<dbReference type="GO" id="GO:0000139">
    <property type="term" value="C:Golgi membrane"/>
    <property type="evidence" value="ECO:0007669"/>
    <property type="project" value="UniProtKB-SubCell"/>
</dbReference>
<dbReference type="GO" id="GO:0005525">
    <property type="term" value="F:GTP binding"/>
    <property type="evidence" value="ECO:0007669"/>
    <property type="project" value="UniProtKB-KW"/>
</dbReference>
<dbReference type="GO" id="GO:0003924">
    <property type="term" value="F:GTPase activity"/>
    <property type="evidence" value="ECO:0007669"/>
    <property type="project" value="InterPro"/>
</dbReference>
<dbReference type="GO" id="GO:0007264">
    <property type="term" value="P:small GTPase-mediated signal transduction"/>
    <property type="evidence" value="ECO:0007669"/>
    <property type="project" value="InterPro"/>
</dbReference>
<dbReference type="CDD" id="cd04172">
    <property type="entry name" value="Rnd3_RhoE_Rho8"/>
    <property type="match status" value="1"/>
</dbReference>
<dbReference type="FunFam" id="3.40.50.300:FF:000407">
    <property type="entry name" value="Rho-related GTP-binding protein RhoE"/>
    <property type="match status" value="1"/>
</dbReference>
<dbReference type="Gene3D" id="3.40.50.300">
    <property type="entry name" value="P-loop containing nucleotide triphosphate hydrolases"/>
    <property type="match status" value="1"/>
</dbReference>
<dbReference type="InterPro" id="IPR027417">
    <property type="entry name" value="P-loop_NTPase"/>
</dbReference>
<dbReference type="InterPro" id="IPR041843">
    <property type="entry name" value="RhoE"/>
</dbReference>
<dbReference type="InterPro" id="IPR005225">
    <property type="entry name" value="Small_GTP-bd"/>
</dbReference>
<dbReference type="InterPro" id="IPR001806">
    <property type="entry name" value="Small_GTPase"/>
</dbReference>
<dbReference type="InterPro" id="IPR003578">
    <property type="entry name" value="Small_GTPase_Rho"/>
</dbReference>
<dbReference type="NCBIfam" id="TIGR00231">
    <property type="entry name" value="small_GTP"/>
    <property type="match status" value="1"/>
</dbReference>
<dbReference type="PANTHER" id="PTHR24072">
    <property type="entry name" value="RHO FAMILY GTPASE"/>
    <property type="match status" value="1"/>
</dbReference>
<dbReference type="Pfam" id="PF00071">
    <property type="entry name" value="Ras"/>
    <property type="match status" value="1"/>
</dbReference>
<dbReference type="PRINTS" id="PR00449">
    <property type="entry name" value="RASTRNSFRMNG"/>
</dbReference>
<dbReference type="SMART" id="SM00175">
    <property type="entry name" value="RAB"/>
    <property type="match status" value="1"/>
</dbReference>
<dbReference type="SMART" id="SM00173">
    <property type="entry name" value="RAS"/>
    <property type="match status" value="1"/>
</dbReference>
<dbReference type="SMART" id="SM00174">
    <property type="entry name" value="RHO"/>
    <property type="match status" value="1"/>
</dbReference>
<dbReference type="SUPFAM" id="SSF52540">
    <property type="entry name" value="P-loop containing nucleoside triphosphate hydrolases"/>
    <property type="match status" value="1"/>
</dbReference>
<dbReference type="PROSITE" id="PS51420">
    <property type="entry name" value="RHO"/>
    <property type="match status" value="1"/>
</dbReference>
<feature type="chain" id="PRO_0000198879" description="Rho-related GTP-binding protein RhoE">
    <location>
        <begin position="1"/>
        <end position="241"/>
    </location>
</feature>
<feature type="propeptide" id="PRO_0000281231" description="Removed in mature form" evidence="1">
    <location>
        <begin position="242"/>
        <end position="244"/>
    </location>
</feature>
<feature type="short sequence motif" description="Effector region" evidence="2">
    <location>
        <begin position="52"/>
        <end position="60"/>
    </location>
</feature>
<feature type="binding site" evidence="1">
    <location>
        <begin position="30"/>
        <end position="37"/>
    </location>
    <ligand>
        <name>GTP</name>
        <dbReference type="ChEBI" id="CHEBI:37565"/>
    </ligand>
</feature>
<feature type="binding site" evidence="1">
    <location>
        <begin position="77"/>
        <end position="81"/>
    </location>
    <ligand>
        <name>GTP</name>
        <dbReference type="ChEBI" id="CHEBI:37565"/>
    </ligand>
</feature>
<feature type="binding site" evidence="1">
    <location>
        <begin position="135"/>
        <end position="138"/>
    </location>
    <ligand>
        <name>GTP</name>
        <dbReference type="ChEBI" id="CHEBI:37565"/>
    </ligand>
</feature>
<feature type="modified residue" description="Cysteine methyl ester" evidence="1">
    <location>
        <position position="241"/>
    </location>
</feature>
<feature type="lipid moiety-binding region" description="S-farnesyl cysteine" evidence="1">
    <location>
        <position position="241"/>
    </location>
</feature>
<feature type="strand" evidence="5">
    <location>
        <begin position="23"/>
        <end position="31"/>
    </location>
</feature>
<feature type="helix" evidence="5">
    <location>
        <begin position="36"/>
        <end position="45"/>
    </location>
</feature>
<feature type="strand" evidence="5">
    <location>
        <begin position="56"/>
        <end position="78"/>
    </location>
</feature>
<feature type="helix" evidence="5">
    <location>
        <begin position="82"/>
        <end position="84"/>
    </location>
</feature>
<feature type="turn" evidence="5">
    <location>
        <begin position="85"/>
        <end position="87"/>
    </location>
</feature>
<feature type="helix" evidence="5">
    <location>
        <begin position="88"/>
        <end position="91"/>
    </location>
</feature>
<feature type="strand" evidence="5">
    <location>
        <begin position="96"/>
        <end position="103"/>
    </location>
</feature>
<feature type="helix" evidence="5">
    <location>
        <begin position="107"/>
        <end position="115"/>
    </location>
</feature>
<feature type="helix" evidence="5">
    <location>
        <begin position="117"/>
        <end position="124"/>
    </location>
</feature>
<feature type="strand" evidence="5">
    <location>
        <begin position="129"/>
        <end position="135"/>
    </location>
</feature>
<feature type="helix" evidence="5">
    <location>
        <begin position="137"/>
        <end position="141"/>
    </location>
</feature>
<feature type="helix" evidence="5">
    <location>
        <begin position="143"/>
        <end position="150"/>
    </location>
</feature>
<feature type="turn" evidence="5">
    <location>
        <begin position="151"/>
        <end position="153"/>
    </location>
</feature>
<feature type="helix" evidence="5">
    <location>
        <begin position="159"/>
        <end position="169"/>
    </location>
</feature>
<feature type="strand" evidence="5">
    <location>
        <begin position="172"/>
        <end position="176"/>
    </location>
</feature>
<feature type="turn" evidence="5">
    <location>
        <begin position="179"/>
        <end position="181"/>
    </location>
</feature>
<feature type="helix" evidence="5">
    <location>
        <begin position="183"/>
        <end position="199"/>
    </location>
</feature>
<reference key="1">
    <citation type="journal article" date="2005" name="Science">
        <title>The transcriptional landscape of the mammalian genome.</title>
        <authorList>
            <person name="Carninci P."/>
            <person name="Kasukawa T."/>
            <person name="Katayama S."/>
            <person name="Gough J."/>
            <person name="Frith M.C."/>
            <person name="Maeda N."/>
            <person name="Oyama R."/>
            <person name="Ravasi T."/>
            <person name="Lenhard B."/>
            <person name="Wells C."/>
            <person name="Kodzius R."/>
            <person name="Shimokawa K."/>
            <person name="Bajic V.B."/>
            <person name="Brenner S.E."/>
            <person name="Batalov S."/>
            <person name="Forrest A.R."/>
            <person name="Zavolan M."/>
            <person name="Davis M.J."/>
            <person name="Wilming L.G."/>
            <person name="Aidinis V."/>
            <person name="Allen J.E."/>
            <person name="Ambesi-Impiombato A."/>
            <person name="Apweiler R."/>
            <person name="Aturaliya R.N."/>
            <person name="Bailey T.L."/>
            <person name="Bansal M."/>
            <person name="Baxter L."/>
            <person name="Beisel K.W."/>
            <person name="Bersano T."/>
            <person name="Bono H."/>
            <person name="Chalk A.M."/>
            <person name="Chiu K.P."/>
            <person name="Choudhary V."/>
            <person name="Christoffels A."/>
            <person name="Clutterbuck D.R."/>
            <person name="Crowe M.L."/>
            <person name="Dalla E."/>
            <person name="Dalrymple B.P."/>
            <person name="de Bono B."/>
            <person name="Della Gatta G."/>
            <person name="di Bernardo D."/>
            <person name="Down T."/>
            <person name="Engstrom P."/>
            <person name="Fagiolini M."/>
            <person name="Faulkner G."/>
            <person name="Fletcher C.F."/>
            <person name="Fukushima T."/>
            <person name="Furuno M."/>
            <person name="Futaki S."/>
            <person name="Gariboldi M."/>
            <person name="Georgii-Hemming P."/>
            <person name="Gingeras T.R."/>
            <person name="Gojobori T."/>
            <person name="Green R.E."/>
            <person name="Gustincich S."/>
            <person name="Harbers M."/>
            <person name="Hayashi Y."/>
            <person name="Hensch T.K."/>
            <person name="Hirokawa N."/>
            <person name="Hill D."/>
            <person name="Huminiecki L."/>
            <person name="Iacono M."/>
            <person name="Ikeo K."/>
            <person name="Iwama A."/>
            <person name="Ishikawa T."/>
            <person name="Jakt M."/>
            <person name="Kanapin A."/>
            <person name="Katoh M."/>
            <person name="Kawasawa Y."/>
            <person name="Kelso J."/>
            <person name="Kitamura H."/>
            <person name="Kitano H."/>
            <person name="Kollias G."/>
            <person name="Krishnan S.P."/>
            <person name="Kruger A."/>
            <person name="Kummerfeld S.K."/>
            <person name="Kurochkin I.V."/>
            <person name="Lareau L.F."/>
            <person name="Lazarevic D."/>
            <person name="Lipovich L."/>
            <person name="Liu J."/>
            <person name="Liuni S."/>
            <person name="McWilliam S."/>
            <person name="Madan Babu M."/>
            <person name="Madera M."/>
            <person name="Marchionni L."/>
            <person name="Matsuda H."/>
            <person name="Matsuzawa S."/>
            <person name="Miki H."/>
            <person name="Mignone F."/>
            <person name="Miyake S."/>
            <person name="Morris K."/>
            <person name="Mottagui-Tabar S."/>
            <person name="Mulder N."/>
            <person name="Nakano N."/>
            <person name="Nakauchi H."/>
            <person name="Ng P."/>
            <person name="Nilsson R."/>
            <person name="Nishiguchi S."/>
            <person name="Nishikawa S."/>
            <person name="Nori F."/>
            <person name="Ohara O."/>
            <person name="Okazaki Y."/>
            <person name="Orlando V."/>
            <person name="Pang K.C."/>
            <person name="Pavan W.J."/>
            <person name="Pavesi G."/>
            <person name="Pesole G."/>
            <person name="Petrovsky N."/>
            <person name="Piazza S."/>
            <person name="Reed J."/>
            <person name="Reid J.F."/>
            <person name="Ring B.Z."/>
            <person name="Ringwald M."/>
            <person name="Rost B."/>
            <person name="Ruan Y."/>
            <person name="Salzberg S.L."/>
            <person name="Sandelin A."/>
            <person name="Schneider C."/>
            <person name="Schoenbach C."/>
            <person name="Sekiguchi K."/>
            <person name="Semple C.A."/>
            <person name="Seno S."/>
            <person name="Sessa L."/>
            <person name="Sheng Y."/>
            <person name="Shibata Y."/>
            <person name="Shimada H."/>
            <person name="Shimada K."/>
            <person name="Silva D."/>
            <person name="Sinclair B."/>
            <person name="Sperling S."/>
            <person name="Stupka E."/>
            <person name="Sugiura K."/>
            <person name="Sultana R."/>
            <person name="Takenaka Y."/>
            <person name="Taki K."/>
            <person name="Tammoja K."/>
            <person name="Tan S.L."/>
            <person name="Tang S."/>
            <person name="Taylor M.S."/>
            <person name="Tegner J."/>
            <person name="Teichmann S.A."/>
            <person name="Ueda H.R."/>
            <person name="van Nimwegen E."/>
            <person name="Verardo R."/>
            <person name="Wei C.L."/>
            <person name="Yagi K."/>
            <person name="Yamanishi H."/>
            <person name="Zabarovsky E."/>
            <person name="Zhu S."/>
            <person name="Zimmer A."/>
            <person name="Hide W."/>
            <person name="Bult C."/>
            <person name="Grimmond S.M."/>
            <person name="Teasdale R.D."/>
            <person name="Liu E.T."/>
            <person name="Brusic V."/>
            <person name="Quackenbush J."/>
            <person name="Wahlestedt C."/>
            <person name="Mattick J.S."/>
            <person name="Hume D.A."/>
            <person name="Kai C."/>
            <person name="Sasaki D."/>
            <person name="Tomaru Y."/>
            <person name="Fukuda S."/>
            <person name="Kanamori-Katayama M."/>
            <person name="Suzuki M."/>
            <person name="Aoki J."/>
            <person name="Arakawa T."/>
            <person name="Iida J."/>
            <person name="Imamura K."/>
            <person name="Itoh M."/>
            <person name="Kato T."/>
            <person name="Kawaji H."/>
            <person name="Kawagashira N."/>
            <person name="Kawashima T."/>
            <person name="Kojima M."/>
            <person name="Kondo S."/>
            <person name="Konno H."/>
            <person name="Nakano K."/>
            <person name="Ninomiya N."/>
            <person name="Nishio T."/>
            <person name="Okada M."/>
            <person name="Plessy C."/>
            <person name="Shibata K."/>
            <person name="Shiraki T."/>
            <person name="Suzuki S."/>
            <person name="Tagami M."/>
            <person name="Waki K."/>
            <person name="Watahiki A."/>
            <person name="Okamura-Oho Y."/>
            <person name="Suzuki H."/>
            <person name="Kawai J."/>
            <person name="Hayashizaki Y."/>
        </authorList>
    </citation>
    <scope>NUCLEOTIDE SEQUENCE [LARGE SCALE MRNA]</scope>
    <source>
        <strain>C57BL/6J</strain>
        <tissue>Embryo</tissue>
    </source>
</reference>
<reference key="2">
    <citation type="journal article" date="2004" name="Genome Res.">
        <title>The status, quality, and expansion of the NIH full-length cDNA project: the Mammalian Gene Collection (MGC).</title>
        <authorList>
            <consortium name="The MGC Project Team"/>
        </authorList>
    </citation>
    <scope>NUCLEOTIDE SEQUENCE [LARGE SCALE MRNA]</scope>
</reference>
<reference key="3">
    <citation type="journal article" date="2003" name="Mol. Cell. Biol.">
        <title>RhoE binds to ROCK I and inhibits downstream signaling.</title>
        <authorList>
            <person name="Riento K."/>
            <person name="Guasch R.M."/>
            <person name="Garg R."/>
            <person name="Jin B."/>
            <person name="Ridley A.J."/>
        </authorList>
    </citation>
    <scope>INTERACTION WITH ROCK1</scope>
    <scope>SUBCELLULAR LOCATION</scope>
</reference>
<reference key="4">
    <citation type="journal article" date="2002" name="Biochemistry">
        <title>Crystal structure of the core domain of RhoE/Rnd3: a constitutively activated small G protein.</title>
        <authorList>
            <person name="Garavini H."/>
            <person name="Riento K."/>
            <person name="Phelan J.P."/>
            <person name="McAlister M.S."/>
            <person name="Ridley A.J."/>
            <person name="Keep N.H."/>
        </authorList>
    </citation>
    <scope>X-RAY CRYSTALLOGRAPHY (2.1 ANGSTROMS) OF 14-200</scope>
</reference>
<keyword id="KW-0002">3D-structure</keyword>
<keyword id="KW-0333">Golgi apparatus</keyword>
<keyword id="KW-0342">GTP-binding</keyword>
<keyword id="KW-0449">Lipoprotein</keyword>
<keyword id="KW-0472">Membrane</keyword>
<keyword id="KW-0488">Methylation</keyword>
<keyword id="KW-0547">Nucleotide-binding</keyword>
<keyword id="KW-0636">Prenylation</keyword>
<keyword id="KW-1185">Reference proteome</keyword>
<name>RND3_MOUSE</name>
<gene>
    <name type="primary">Rnd3</name>
    <name type="synonym">Arhe</name>
    <name type="synonym">Rhoe</name>
</gene>
<protein>
    <recommendedName>
        <fullName>Rho-related GTP-binding protein RhoE</fullName>
    </recommendedName>
    <alternativeName>
        <fullName>Rho family GTPase 3</fullName>
    </alternativeName>
    <alternativeName>
        <fullName>Rnd3</fullName>
    </alternativeName>
</protein>
<organism>
    <name type="scientific">Mus musculus</name>
    <name type="common">Mouse</name>
    <dbReference type="NCBI Taxonomy" id="10090"/>
    <lineage>
        <taxon>Eukaryota</taxon>
        <taxon>Metazoa</taxon>
        <taxon>Chordata</taxon>
        <taxon>Craniata</taxon>
        <taxon>Vertebrata</taxon>
        <taxon>Euteleostomi</taxon>
        <taxon>Mammalia</taxon>
        <taxon>Eutheria</taxon>
        <taxon>Euarchontoglires</taxon>
        <taxon>Glires</taxon>
        <taxon>Rodentia</taxon>
        <taxon>Myomorpha</taxon>
        <taxon>Muroidea</taxon>
        <taxon>Muridae</taxon>
        <taxon>Murinae</taxon>
        <taxon>Mus</taxon>
        <taxon>Mus</taxon>
    </lineage>
</organism>
<comment type="function">
    <text>Binds GTP but lacks intrinsic GTPase activity and is resistant to Rho-specific GTPase-activating proteins.</text>
</comment>
<comment type="subunit">
    <text evidence="1 3">Interacts with UBXD5 (By similarity). Binds ROCK1.</text>
</comment>
<comment type="interaction">
    <interactant intactId="EBI-6930266">
        <id>P61588</id>
    </interactant>
    <interactant intactId="EBI-989293">
        <id>P70335</id>
        <label>Rock1</label>
    </interactant>
    <organismsDiffer>false</organismsDiffer>
    <experiments>7</experiments>
</comment>
<comment type="interaction">
    <interactant intactId="EBI-6930266">
        <id>P61588</id>
    </interactant>
    <interactant intactId="EBI-7237884">
        <id>Q13017</id>
        <label>ARHGAP5</label>
    </interactant>
    <organismsDiffer>true</organismsDiffer>
    <experiments>2</experiments>
</comment>
<comment type="interaction">
    <interactant intactId="EBI-6930266">
        <id>P61588</id>
    </interactant>
    <interactant intactId="EBI-359815">
        <id>P31946</id>
        <label>YWHAB</label>
    </interactant>
    <organismsDiffer>true</organismsDiffer>
    <experiments>5</experiments>
</comment>
<comment type="interaction">
    <interactant intactId="EBI-6930266">
        <id>P61588</id>
    </interactant>
    <interactant intactId="EBI-356498">
        <id>P62258</id>
        <label>YWHAE</label>
    </interactant>
    <organismsDiffer>true</organismsDiffer>
    <experiments>2</experiments>
</comment>
<comment type="interaction">
    <interactant intactId="EBI-6930266">
        <id>P61588</id>
    </interactant>
    <interactant intactId="EBI-359832">
        <id>P61981</id>
        <label>YWHAG</label>
    </interactant>
    <organismsDiffer>true</organismsDiffer>
    <experiments>2</experiments>
</comment>
<comment type="interaction">
    <interactant intactId="EBI-6930266">
        <id>P61588</id>
    </interactant>
    <interactant intactId="EBI-306940">
        <id>Q04917</id>
        <label>YWHAH</label>
    </interactant>
    <organismsDiffer>true</organismsDiffer>
    <experiments>2</experiments>
</comment>
<comment type="interaction">
    <interactant intactId="EBI-6930266">
        <id>P61588</id>
    </interactant>
    <interactant intactId="EBI-359854">
        <id>P27348</id>
        <label>YWHAQ</label>
    </interactant>
    <organismsDiffer>true</organismsDiffer>
    <experiments>2</experiments>
</comment>
<comment type="interaction">
    <interactant intactId="EBI-6930266">
        <id>P61588</id>
    </interactant>
    <interactant intactId="EBI-347088">
        <id>P63104</id>
        <label>YWHAZ</label>
    </interactant>
    <organismsDiffer>true</organismsDiffer>
    <experiments>3</experiments>
</comment>
<comment type="subcellular location">
    <subcellularLocation>
        <location evidence="3">Golgi apparatus membrane</location>
        <topology evidence="3">Peripheral membrane protein</topology>
    </subcellularLocation>
</comment>
<comment type="tissue specificity">
    <text>Ubiquitous.</text>
</comment>
<comment type="similarity">
    <text evidence="4">Belongs to the small GTPase superfamily. Rho family.</text>
</comment>
<evidence type="ECO:0000250" key="1"/>
<evidence type="ECO:0000255" key="2"/>
<evidence type="ECO:0000269" key="3">
    <source>
    </source>
</evidence>
<evidence type="ECO:0000305" key="4"/>
<evidence type="ECO:0007829" key="5">
    <source>
        <dbReference type="PDB" id="1GWN"/>
    </source>
</evidence>
<proteinExistence type="evidence at protein level"/>
<sequence length="244" mass="27368">MKERRASQKLSSKSIMDPNQNVKCKIVVVGDSQCGKTALLHVFAKDCFPENYVPTVFENYTASFEIDTQRIELSLWDTSGSPYYDNVRPLSYPDSDAVLICFDISRPETLDSVLKKWKGEIQEFCPNTKMLLVGCKSDLRTDVSTLVELSNHRQTPVSYDQGANMAKQIGAATYIECSALQSENSVRDIFHVATLACVNKTNKNVKRNKSQRATKRISHMPSRPELSAVATDLRKDKAKSCTVM</sequence>
<accession>P61588</accession>
<accession>P52199</accession>
<accession>Q6ZWS2</accession>